<proteinExistence type="evidence at protein level"/>
<name>RDRP_I97A1</name>
<keyword id="KW-0002">3D-structure</keyword>
<keyword id="KW-1262">Eukaryotic host gene expression shutoff by virus</keyword>
<keyword id="KW-1191">Eukaryotic host transcription shutoff by virus</keyword>
<keyword id="KW-1035">Host cytoplasm</keyword>
<keyword id="KW-1190">Host gene expression shutoff by virus</keyword>
<keyword id="KW-1048">Host nucleus</keyword>
<keyword id="KW-0945">Host-virus interaction</keyword>
<keyword id="KW-1104">Inhibition of host RNA polymerase II by virus</keyword>
<keyword id="KW-0547">Nucleotide-binding</keyword>
<keyword id="KW-0548">Nucleotidyltransferase</keyword>
<keyword id="KW-0597">Phosphoprotein</keyword>
<keyword id="KW-0696">RNA-directed RNA polymerase</keyword>
<keyword id="KW-0808">Transferase</keyword>
<keyword id="KW-0693">Viral RNA replication</keyword>
<keyword id="KW-1195">Viral transcription</keyword>
<feature type="chain" id="PRO_0000078752" description="RNA-directed RNA polymerase catalytic subunit">
    <location>
        <begin position="1"/>
        <end position="758"/>
    </location>
</feature>
<feature type="domain" description="RdRp catalytic" evidence="1">
    <location>
        <begin position="286"/>
        <end position="483"/>
    </location>
</feature>
<feature type="region of interest" description="Disordered" evidence="2">
    <location>
        <begin position="53"/>
        <end position="82"/>
    </location>
</feature>
<feature type="region of interest" description="Promoter-binding site" evidence="1">
    <location>
        <begin position="249"/>
        <end position="256"/>
    </location>
</feature>
<feature type="short sequence motif" description="Nuclear localization signal" evidence="1">
    <location>
        <begin position="187"/>
        <end position="195"/>
    </location>
</feature>
<feature type="short sequence motif" description="Nuclear localization signal" evidence="1">
    <location>
        <begin position="203"/>
        <end position="216"/>
    </location>
</feature>
<feature type="compositionally biased region" description="Polar residues" evidence="2">
    <location>
        <begin position="55"/>
        <end position="64"/>
    </location>
</feature>
<feature type="sequence conflict" description="In Ref. 2; AAC32096 and 3; CAB95863." ref="2 3">
    <original>M</original>
    <variation>V</variation>
    <location>
        <position position="119"/>
    </location>
</feature>
<feature type="sequence conflict" description="In Ref. 2; AAC32096." ref="2">
    <original>R</original>
    <variation>G</variation>
    <location>
        <position position="189"/>
    </location>
</feature>
<feature type="sequence conflict" description="In Ref. 2; AAC32096 and 3; CAB95863." ref="2 3">
    <original>G</original>
    <variation>C</variation>
    <location>
        <position position="610"/>
    </location>
</feature>
<feature type="sequence conflict" description="In Ref. 3; CAB95863." ref="3">
    <original>V</original>
    <variation>A</variation>
    <location>
        <position position="660"/>
    </location>
</feature>
<feature type="sequence conflict" description="In Ref. 2; AAC32096." ref="2">
    <original>S</original>
    <variation>P</variation>
    <location>
        <position position="712"/>
    </location>
</feature>
<feature type="sequence conflict" description="In Ref. 3; CAB95863." ref="3">
    <original>G</original>
    <variation>R</variation>
    <location>
        <position position="757"/>
    </location>
</feature>
<feature type="helix" evidence="3">
    <location>
        <begin position="5"/>
        <end position="10"/>
    </location>
</feature>
<evidence type="ECO:0000255" key="1">
    <source>
        <dbReference type="HAMAP-Rule" id="MF_04065"/>
    </source>
</evidence>
<evidence type="ECO:0000256" key="2">
    <source>
        <dbReference type="SAM" id="MobiDB-lite"/>
    </source>
</evidence>
<evidence type="ECO:0007829" key="3">
    <source>
        <dbReference type="PDB" id="3CM8"/>
    </source>
</evidence>
<gene>
    <name evidence="1" type="primary">PB1</name>
</gene>
<protein>
    <recommendedName>
        <fullName evidence="1">RNA-directed RNA polymerase catalytic subunit</fullName>
        <ecNumber evidence="1">2.7.7.48</ecNumber>
    </recommendedName>
    <alternativeName>
        <fullName evidence="1">Polymerase basic protein 1</fullName>
        <shortName evidence="1">PB1</shortName>
    </alternativeName>
    <alternativeName>
        <fullName evidence="1">RNA-directed RNA polymerase subunit P1</fullName>
    </alternativeName>
</protein>
<comment type="function">
    <text evidence="1">RNA-dependent RNA polymerase which is responsible for replication and transcription of virus RNA segments. The transcription of viral mRNAs occurs by a unique mechanism called cap-snatching. 5' methylated caps of cellular mRNAs are cleaved after 10-13 nucleotides by PA. In turn, these short capped RNAs are used as primers by PB1 for transcription of viral mRNAs. During virus replication, PB1 initiates RNA synthesis and copy vRNA into complementary RNA (cRNA) which in turn serves as a template for the production of more vRNAs.</text>
</comment>
<comment type="catalytic activity">
    <reaction evidence="1">
        <text>RNA(n) + a ribonucleoside 5'-triphosphate = RNA(n+1) + diphosphate</text>
        <dbReference type="Rhea" id="RHEA:21248"/>
        <dbReference type="Rhea" id="RHEA-COMP:14527"/>
        <dbReference type="Rhea" id="RHEA-COMP:17342"/>
        <dbReference type="ChEBI" id="CHEBI:33019"/>
        <dbReference type="ChEBI" id="CHEBI:61557"/>
        <dbReference type="ChEBI" id="CHEBI:140395"/>
        <dbReference type="EC" id="2.7.7.48"/>
    </reaction>
</comment>
<comment type="subunit">
    <text evidence="1">Influenza RNA polymerase is composed of three subunits: PB1, PB2 and PA. Interacts (via N-terminus) with PA (via C-terminus). Interacts (via C-terminus) with PB2 (via N-terminus); this interaction is essential for transcription initiation.</text>
</comment>
<comment type="subcellular location">
    <subcellularLocation>
        <location evidence="1">Host nucleus</location>
    </subcellularLocation>
    <subcellularLocation>
        <location evidence="1">Host cytoplasm</location>
    </subcellularLocation>
</comment>
<comment type="PTM">
    <text evidence="1">Phosphorylated by host PRKCA.</text>
</comment>
<comment type="similarity">
    <text evidence="1">Belongs to the influenza viruses polymerase PB1 family.</text>
</comment>
<sequence length="758" mass="86283">MDVNPTLLFLKVPAQNAISTTFPYTGDPPYSHGTGTGYTMDTVNRTHQYSEKGRWTTNTETGAPQLNPIDGPLPEDNEPSGYAQTDCVLEAMAFLEESHPGLFENSCLETMEVVQQTRMDKLTQGRQTYDWTLNRNQPAATALANTIEVFRSNGLTANESGRLIDFLKDVMESMDKEEMEITTHFQRKRRVRDNMTKKMVTQRTIGKKKQRLTKKSYLIRALTLNTMTKDAERGKLKRRAIATPGMQIRGFVHFVEALARSICEKLEQSGLPVGGNEKKAKLANVVRKMMTNSQDTELSFTVTGDNTKWNENQNPRIFLAMITYITRNQPEWFRNVLSIAPIMFSNKMARLGKGYMFESKSMKLRTQIPAEMLANIDLKYFNESTRKKIEKIRPLLVEGTASLSPGMMMGMFNMLSTVLGVSILNLGQKRYTKTTYWWDGLQSSDDFALIVNAPNHEGIQAGVDRFYRTCKLVGINMSKKKSYINRTGTFEFTSFFYRYGFVANFSMELPSFGVSGINESADMSIGVTVIKNNMINNDLGPATAQMALQLFIKDYRYTYRCHRGDTQIQTRRSFELKKLWEQTRSKAGLLVSDGGPNLYNIRNLHIPEVGLKWELMDEDYQGRLCNPLNPFVSHKEVESVNNAVVMPAHGPAKSMEYDAVATTHSWIPKRNRSILNTSQRGILEDEQMYQKCCTLFEKFFPSSSYRRPVGISSMMEAMVSRARIDARIDFESGRIKKEEFAEILKICSTIEELGRQGK</sequence>
<reference key="1">
    <citation type="journal article" date="1998" name="Science">
        <title>Characterization of an avian influenza A (H5N1) virus isolated from a child with a fatal respiratory illness.</title>
        <authorList>
            <person name="Subbarao K."/>
            <person name="Klimov A."/>
            <person name="Katz J."/>
            <person name="Regnery H."/>
            <person name="Lim W."/>
            <person name="Hall H."/>
            <person name="Perdue M."/>
            <person name="Swayne D."/>
            <person name="Bender C."/>
            <person name="Huang J."/>
            <person name="Hemphill M."/>
            <person name="Rowe T."/>
            <person name="Shaw M."/>
            <person name="Xu X."/>
            <person name="Fukuda K."/>
            <person name="Cox N."/>
        </authorList>
    </citation>
    <scope>NUCLEOTIDE SEQUENCE [GENOMIC RNA]</scope>
</reference>
<reference key="2">
    <citation type="journal article" date="1998" name="J. Virol.">
        <title>Comparisons of highly virulent H5N1 influenza A viruses isolated from humans and chickens from Hong Kong.</title>
        <authorList>
            <person name="Suarez D.L."/>
            <person name="Perdue M.L."/>
            <person name="Cox N."/>
            <person name="Rowe T."/>
            <person name="Bender C."/>
            <person name="Huang J."/>
            <person name="Swayne D.E."/>
        </authorList>
    </citation>
    <scope>NUCLEOTIDE SEQUENCE [GENOMIC RNA]</scope>
</reference>
<reference key="3">
    <citation type="journal article" date="2000" name="Proc. Natl. Acad. Sci. U.S.A.">
        <title>Avian-to-human transmission of H9N2 subtype influenza A viruses: relationship between H9N2 and H5N1 human isolates.</title>
        <authorList>
            <person name="Lin Y.P."/>
            <person name="Shaw M."/>
            <person name="Gregory V."/>
            <person name="Cameron K."/>
            <person name="Lim W."/>
            <person name="Klimov A."/>
            <person name="Subbarao K."/>
            <person name="Guan Y."/>
            <person name="Krauss S."/>
            <person name="Shortridge K."/>
            <person name="Webster R."/>
            <person name="Cox N."/>
            <person name="Hay A."/>
        </authorList>
    </citation>
    <scope>NUCLEOTIDE SEQUENCE [GENOMIC RNA]</scope>
</reference>
<dbReference type="EC" id="2.7.7.48" evidence="1"/>
<dbReference type="EMBL" id="AF036362">
    <property type="protein sequence ID" value="AAC34271.1"/>
    <property type="molecule type" value="Genomic_RNA"/>
</dbReference>
<dbReference type="EMBL" id="AF046094">
    <property type="protein sequence ID" value="AAC32096.1"/>
    <property type="molecule type" value="Genomic_RNA"/>
</dbReference>
<dbReference type="EMBL" id="AJ404633">
    <property type="protein sequence ID" value="CAB95863.1"/>
    <property type="molecule type" value="Genomic_RNA"/>
</dbReference>
<dbReference type="PDB" id="3CM8">
    <property type="method" value="X-ray"/>
    <property type="resolution" value="2.90 A"/>
    <property type="chains" value="B=1-25"/>
</dbReference>
<dbReference type="PDB" id="7WT4">
    <property type="method" value="X-ray"/>
    <property type="resolution" value="1.89 A"/>
    <property type="chains" value="C/F=498-505"/>
</dbReference>
<dbReference type="PDB" id="7WT5">
    <property type="method" value="X-ray"/>
    <property type="resolution" value="2.10 A"/>
    <property type="chains" value="C/F=498-505"/>
</dbReference>
<dbReference type="PDBsum" id="3CM8"/>
<dbReference type="PDBsum" id="7WT4"/>
<dbReference type="PDBsum" id="7WT5"/>
<dbReference type="SMR" id="Q9WLS3"/>
<dbReference type="EvolutionaryTrace" id="Q9WLS3"/>
<dbReference type="Proteomes" id="UP000008587">
    <property type="component" value="Genome"/>
</dbReference>
<dbReference type="GO" id="GO:0030430">
    <property type="term" value="C:host cell cytoplasm"/>
    <property type="evidence" value="ECO:0007669"/>
    <property type="project" value="UniProtKB-SubCell"/>
</dbReference>
<dbReference type="GO" id="GO:0042025">
    <property type="term" value="C:host cell nucleus"/>
    <property type="evidence" value="ECO:0007669"/>
    <property type="project" value="UniProtKB-SubCell"/>
</dbReference>
<dbReference type="GO" id="GO:0000166">
    <property type="term" value="F:nucleotide binding"/>
    <property type="evidence" value="ECO:0007669"/>
    <property type="project" value="UniProtKB-UniRule"/>
</dbReference>
<dbReference type="GO" id="GO:0003723">
    <property type="term" value="F:RNA binding"/>
    <property type="evidence" value="ECO:0007669"/>
    <property type="project" value="InterPro"/>
</dbReference>
<dbReference type="GO" id="GO:0003968">
    <property type="term" value="F:RNA-directed RNA polymerase activity"/>
    <property type="evidence" value="ECO:0007669"/>
    <property type="project" value="UniProtKB-UniRule"/>
</dbReference>
<dbReference type="GO" id="GO:0006351">
    <property type="term" value="P:DNA-templated transcription"/>
    <property type="evidence" value="ECO:0007669"/>
    <property type="project" value="UniProtKB-UniRule"/>
</dbReference>
<dbReference type="GO" id="GO:0039657">
    <property type="term" value="P:symbiont-mediated suppression of host gene expression"/>
    <property type="evidence" value="ECO:0007669"/>
    <property type="project" value="UniProtKB-KW"/>
</dbReference>
<dbReference type="GO" id="GO:0039523">
    <property type="term" value="P:symbiont-mediated suppression of host mRNA transcription via inhibition of RNA polymerase II activity"/>
    <property type="evidence" value="ECO:0007669"/>
    <property type="project" value="UniProtKB-UniRule"/>
</dbReference>
<dbReference type="GO" id="GO:0039694">
    <property type="term" value="P:viral RNA genome replication"/>
    <property type="evidence" value="ECO:0007669"/>
    <property type="project" value="UniProtKB-UniRule"/>
</dbReference>
<dbReference type="GO" id="GO:0019083">
    <property type="term" value="P:viral transcription"/>
    <property type="evidence" value="ECO:0007669"/>
    <property type="project" value="UniProtKB-KW"/>
</dbReference>
<dbReference type="Gene3D" id="6.10.140.720">
    <property type="match status" value="1"/>
</dbReference>
<dbReference type="HAMAP" id="MF_04065">
    <property type="entry name" value="INFV_RDRP"/>
    <property type="match status" value="1"/>
</dbReference>
<dbReference type="InterPro" id="IPR007099">
    <property type="entry name" value="RNA-dir_pol_NSvirus"/>
</dbReference>
<dbReference type="InterPro" id="IPR001407">
    <property type="entry name" value="RNA_pol_PB1_influenza"/>
</dbReference>
<dbReference type="Pfam" id="PF00602">
    <property type="entry name" value="Flu_PB1"/>
    <property type="match status" value="1"/>
</dbReference>
<dbReference type="PIRSF" id="PIRSF000827">
    <property type="entry name" value="RdRPol_OMV"/>
    <property type="match status" value="1"/>
</dbReference>
<dbReference type="PROSITE" id="PS50525">
    <property type="entry name" value="RDRP_SSRNA_NEG_SEG"/>
    <property type="match status" value="1"/>
</dbReference>
<organismHost>
    <name type="scientific">Aves</name>
    <dbReference type="NCBI Taxonomy" id="8782"/>
</organismHost>
<organismHost>
    <name type="scientific">Felis catus</name>
    <name type="common">Cat</name>
    <name type="synonym">Felis silvestris catus</name>
    <dbReference type="NCBI Taxonomy" id="9685"/>
</organismHost>
<organismHost>
    <name type="scientific">Homo sapiens</name>
    <name type="common">Human</name>
    <dbReference type="NCBI Taxonomy" id="9606"/>
</organismHost>
<organismHost>
    <name type="scientific">Panthera pardus</name>
    <name type="common">Leopard</name>
    <name type="synonym">Felis pardus</name>
    <dbReference type="NCBI Taxonomy" id="9691"/>
</organismHost>
<organismHost>
    <name type="scientific">Panthera tigris</name>
    <name type="common">Tiger</name>
    <dbReference type="NCBI Taxonomy" id="9694"/>
</organismHost>
<organismHost>
    <name type="scientific">Sus scrofa</name>
    <name type="common">Pig</name>
    <dbReference type="NCBI Taxonomy" id="9823"/>
</organismHost>
<accession>Q9WLS3</accession>
<accession>Q9ICX8</accession>
<accession>Q9WA97</accession>
<organism>
    <name type="scientific">Influenza A virus (strain A/Hong Kong/156/1997 H5N1 genotype Gs/Gd)</name>
    <dbReference type="NCBI Taxonomy" id="130763"/>
    <lineage>
        <taxon>Viruses</taxon>
        <taxon>Riboviria</taxon>
        <taxon>Orthornavirae</taxon>
        <taxon>Negarnaviricota</taxon>
        <taxon>Polyploviricotina</taxon>
        <taxon>Insthoviricetes</taxon>
        <taxon>Articulavirales</taxon>
        <taxon>Orthomyxoviridae</taxon>
        <taxon>Alphainfluenzavirus</taxon>
        <taxon>Alphainfluenzavirus influenzae</taxon>
        <taxon>Influenza A virus</taxon>
    </lineage>
</organism>